<name>ARFH_ORYSJ</name>
<comment type="function">
    <text>Auxin response factors (ARFs) are transcriptional factors that bind specifically to the DNA sequence 5'-TGTCTC-3' found in the auxin-responsive promoter elements (AuxREs).</text>
</comment>
<comment type="subunit">
    <text evidence="1">Homodimers and heterodimers.</text>
</comment>
<comment type="subcellular location">
    <subcellularLocation>
        <location evidence="2">Nucleus</location>
    </subcellularLocation>
</comment>
<comment type="tissue specificity">
    <text evidence="5">Expressed in roots, culms, leaves and young panicles.</text>
</comment>
<comment type="domain">
    <text>Interactions between auxin response factors (ARFs) and Aux/IAA proteins occur through their C-terminal dimerization domains III and IV.</text>
</comment>
<comment type="similarity">
    <text evidence="6">Belongs to the ARF family.</text>
</comment>
<comment type="sequence caution" evidence="6">
    <conflict type="erroneous gene model prediction">
        <sequence resource="EMBL-CDS" id="BAF09402"/>
    </conflict>
</comment>
<organism>
    <name type="scientific">Oryza sativa subsp. japonica</name>
    <name type="common">Rice</name>
    <dbReference type="NCBI Taxonomy" id="39947"/>
    <lineage>
        <taxon>Eukaryota</taxon>
        <taxon>Viridiplantae</taxon>
        <taxon>Streptophyta</taxon>
        <taxon>Embryophyta</taxon>
        <taxon>Tracheophyta</taxon>
        <taxon>Spermatophyta</taxon>
        <taxon>Magnoliopsida</taxon>
        <taxon>Liliopsida</taxon>
        <taxon>Poales</taxon>
        <taxon>Poaceae</taxon>
        <taxon>BOP clade</taxon>
        <taxon>Oryzoideae</taxon>
        <taxon>Oryzeae</taxon>
        <taxon>Oryzinae</taxon>
        <taxon>Oryza</taxon>
        <taxon>Oryza sativa</taxon>
    </lineage>
</organism>
<sequence length="681" mass="73843">MITFADLAEPAPGAERCVDRQLWLACAGGMCTVPPVGAAVYYFPQGHAEHALGLAAPELSAARVPALVPCRVASVRYMADPDTDEVFARIRLVPLRAAEDGDVEEDGAAAGEEHEKPASFAKTLTQSDANNGGGFSVPRYCAETIFPRLDYAADPPVQTVVAKDVHGVAWNFRHIYRGTPRRHLLTTGWSTFVNQKKLVAGDSIVFLRGDGGDLHVGIRRAKRGFCGGGGGAEEASLPGWDQYGGLMRGNASPCAAAKGRGKVRAEDLVEAARLANGGQPFEVVYYPRASTPEFCVRAAAVRAAMRVQWCPGMRFKMAFETEDSSRISWFMGTVASVQVADPIRWPQSPWRLLQVTWDEPDLLQNVKRVSPWLVELVSSMPAINLSSFSPPRKKPRILAYPEFPFEGQLLNPAFPPNPLAHGHHHYHHNHPSFFPFPDVSAPAGIQGARHAQFGPSLSDLHLTHLQSSLMYPGLRRPDHVGPTSIPPPRISTDLTMGSSPPARALSMGAKKPDDAKPPGLMLFGQRILTERQMSLSGTTSPAATGNSSLNWNTEKGASEGSGSGVIQNSPTDNTSSERLQWFRENSTVSELGLEPGQCKVFIESDTVGRNLDLSSLASFEQLYGRLSEMFCIDSAELRSRVLYRGATGEVRHAGDEPFSEFIKLARRLTILTDAGSDNLGS</sequence>
<keyword id="KW-0927">Auxin signaling pathway</keyword>
<keyword id="KW-0238">DNA-binding</keyword>
<keyword id="KW-0539">Nucleus</keyword>
<keyword id="KW-1185">Reference proteome</keyword>
<keyword id="KW-0804">Transcription</keyword>
<keyword id="KW-0805">Transcription regulation</keyword>
<accession>Q6K223</accession>
<accession>A0A0P0VLW1</accession>
<accession>B7FA46</accession>
<accession>Q0DZD6</accession>
<feature type="chain" id="PRO_0000299262" description="Auxin response factor 8">
    <location>
        <begin position="1"/>
        <end position="681"/>
    </location>
</feature>
<feature type="domain" description="PB1" evidence="3">
    <location>
        <begin position="595"/>
        <end position="675"/>
    </location>
</feature>
<feature type="DNA-binding region" description="TF-B3" evidence="2">
    <location>
        <begin position="120"/>
        <end position="222"/>
    </location>
</feature>
<feature type="region of interest" description="Disordered" evidence="4">
    <location>
        <begin position="474"/>
        <end position="518"/>
    </location>
</feature>
<feature type="region of interest" description="Disordered" evidence="4">
    <location>
        <begin position="534"/>
        <end position="577"/>
    </location>
</feature>
<feature type="compositionally biased region" description="Polar residues" evidence="4">
    <location>
        <begin position="534"/>
        <end position="555"/>
    </location>
</feature>
<feature type="compositionally biased region" description="Polar residues" evidence="4">
    <location>
        <begin position="564"/>
        <end position="577"/>
    </location>
</feature>
<protein>
    <recommendedName>
        <fullName>Auxin response factor 8</fullName>
    </recommendedName>
</protein>
<evidence type="ECO:0000250" key="1"/>
<evidence type="ECO:0000255" key="2">
    <source>
        <dbReference type="PROSITE-ProRule" id="PRU00326"/>
    </source>
</evidence>
<evidence type="ECO:0000255" key="3">
    <source>
        <dbReference type="PROSITE-ProRule" id="PRU01081"/>
    </source>
</evidence>
<evidence type="ECO:0000256" key="4">
    <source>
        <dbReference type="SAM" id="MobiDB-lite"/>
    </source>
</evidence>
<evidence type="ECO:0000269" key="5">
    <source>
    </source>
</evidence>
<evidence type="ECO:0000305" key="6"/>
<proteinExistence type="evidence at transcript level"/>
<gene>
    <name type="primary">ARF8</name>
    <name type="ordered locus">Os02g0628600</name>
    <name type="ordered locus">LOC_Os02g41800</name>
    <name type="ORF">B1469H02.12</name>
    <name type="ORF">OsJ_07601</name>
</gene>
<reference key="1">
    <citation type="journal article" date="2005" name="Nature">
        <title>The map-based sequence of the rice genome.</title>
        <authorList>
            <consortium name="International rice genome sequencing project (IRGSP)"/>
        </authorList>
    </citation>
    <scope>NUCLEOTIDE SEQUENCE [LARGE SCALE GENOMIC DNA]</scope>
    <source>
        <strain>cv. Nipponbare</strain>
    </source>
</reference>
<reference key="2">
    <citation type="journal article" date="2008" name="Nucleic Acids Res.">
        <title>The rice annotation project database (RAP-DB): 2008 update.</title>
        <authorList>
            <consortium name="The rice annotation project (RAP)"/>
        </authorList>
    </citation>
    <scope>GENOME REANNOTATION</scope>
    <source>
        <strain>cv. Nipponbare</strain>
    </source>
</reference>
<reference key="3">
    <citation type="journal article" date="2013" name="Rice">
        <title>Improvement of the Oryza sativa Nipponbare reference genome using next generation sequence and optical map data.</title>
        <authorList>
            <person name="Kawahara Y."/>
            <person name="de la Bastide M."/>
            <person name="Hamilton J.P."/>
            <person name="Kanamori H."/>
            <person name="McCombie W.R."/>
            <person name="Ouyang S."/>
            <person name="Schwartz D.C."/>
            <person name="Tanaka T."/>
            <person name="Wu J."/>
            <person name="Zhou S."/>
            <person name="Childs K.L."/>
            <person name="Davidson R.M."/>
            <person name="Lin H."/>
            <person name="Quesada-Ocampo L."/>
            <person name="Vaillancourt B."/>
            <person name="Sakai H."/>
            <person name="Lee S.S."/>
            <person name="Kim J."/>
            <person name="Numa H."/>
            <person name="Itoh T."/>
            <person name="Buell C.R."/>
            <person name="Matsumoto T."/>
        </authorList>
    </citation>
    <scope>GENOME REANNOTATION</scope>
    <source>
        <strain>cv. Nipponbare</strain>
    </source>
</reference>
<reference key="4">
    <citation type="journal article" date="2005" name="PLoS Biol.">
        <title>The genomes of Oryza sativa: a history of duplications.</title>
        <authorList>
            <person name="Yu J."/>
            <person name="Wang J."/>
            <person name="Lin W."/>
            <person name="Li S."/>
            <person name="Li H."/>
            <person name="Zhou J."/>
            <person name="Ni P."/>
            <person name="Dong W."/>
            <person name="Hu S."/>
            <person name="Zeng C."/>
            <person name="Zhang J."/>
            <person name="Zhang Y."/>
            <person name="Li R."/>
            <person name="Xu Z."/>
            <person name="Li S."/>
            <person name="Li X."/>
            <person name="Zheng H."/>
            <person name="Cong L."/>
            <person name="Lin L."/>
            <person name="Yin J."/>
            <person name="Geng J."/>
            <person name="Li G."/>
            <person name="Shi J."/>
            <person name="Liu J."/>
            <person name="Lv H."/>
            <person name="Li J."/>
            <person name="Wang J."/>
            <person name="Deng Y."/>
            <person name="Ran L."/>
            <person name="Shi X."/>
            <person name="Wang X."/>
            <person name="Wu Q."/>
            <person name="Li C."/>
            <person name="Ren X."/>
            <person name="Wang J."/>
            <person name="Wang X."/>
            <person name="Li D."/>
            <person name="Liu D."/>
            <person name="Zhang X."/>
            <person name="Ji Z."/>
            <person name="Zhao W."/>
            <person name="Sun Y."/>
            <person name="Zhang Z."/>
            <person name="Bao J."/>
            <person name="Han Y."/>
            <person name="Dong L."/>
            <person name="Ji J."/>
            <person name="Chen P."/>
            <person name="Wu S."/>
            <person name="Liu J."/>
            <person name="Xiao Y."/>
            <person name="Bu D."/>
            <person name="Tan J."/>
            <person name="Yang L."/>
            <person name="Ye C."/>
            <person name="Zhang J."/>
            <person name="Xu J."/>
            <person name="Zhou Y."/>
            <person name="Yu Y."/>
            <person name="Zhang B."/>
            <person name="Zhuang S."/>
            <person name="Wei H."/>
            <person name="Liu B."/>
            <person name="Lei M."/>
            <person name="Yu H."/>
            <person name="Li Y."/>
            <person name="Xu H."/>
            <person name="Wei S."/>
            <person name="He X."/>
            <person name="Fang L."/>
            <person name="Zhang Z."/>
            <person name="Zhang Y."/>
            <person name="Huang X."/>
            <person name="Su Z."/>
            <person name="Tong W."/>
            <person name="Li J."/>
            <person name="Tong Z."/>
            <person name="Li S."/>
            <person name="Ye J."/>
            <person name="Wang L."/>
            <person name="Fang L."/>
            <person name="Lei T."/>
            <person name="Chen C.-S."/>
            <person name="Chen H.-C."/>
            <person name="Xu Z."/>
            <person name="Li H."/>
            <person name="Huang H."/>
            <person name="Zhang F."/>
            <person name="Xu H."/>
            <person name="Li N."/>
            <person name="Zhao C."/>
            <person name="Li S."/>
            <person name="Dong L."/>
            <person name="Huang Y."/>
            <person name="Li L."/>
            <person name="Xi Y."/>
            <person name="Qi Q."/>
            <person name="Li W."/>
            <person name="Zhang B."/>
            <person name="Hu W."/>
            <person name="Zhang Y."/>
            <person name="Tian X."/>
            <person name="Jiao Y."/>
            <person name="Liang X."/>
            <person name="Jin J."/>
            <person name="Gao L."/>
            <person name="Zheng W."/>
            <person name="Hao B."/>
            <person name="Liu S.-M."/>
            <person name="Wang W."/>
            <person name="Yuan L."/>
            <person name="Cao M."/>
            <person name="McDermott J."/>
            <person name="Samudrala R."/>
            <person name="Wang J."/>
            <person name="Wong G.K.-S."/>
            <person name="Yang H."/>
        </authorList>
    </citation>
    <scope>NUCLEOTIDE SEQUENCE [LARGE SCALE GENOMIC DNA]</scope>
    <source>
        <strain>cv. Nipponbare</strain>
    </source>
</reference>
<reference key="5">
    <citation type="submission" date="2006-10" db="EMBL/GenBank/DDBJ databases">
        <title>Oryza sativa full length cDNA.</title>
        <authorList>
            <consortium name="The rice full-length cDNA consortium"/>
        </authorList>
    </citation>
    <scope>NUCLEOTIDE SEQUENCE [LARGE SCALE MRNA]</scope>
    <source>
        <strain>cv. Nipponbare</strain>
    </source>
</reference>
<reference key="6">
    <citation type="journal article" date="2007" name="Gene">
        <title>Genome-wide analysis of the auxin response factors (ARF) gene family in rice (Oryza sativa).</title>
        <authorList>
            <person name="Wang D."/>
            <person name="Pei K."/>
            <person name="Fu Y."/>
            <person name="Sun Z."/>
            <person name="Li S."/>
            <person name="Liu H."/>
            <person name="Tang K."/>
            <person name="Han B."/>
            <person name="Tao Y."/>
        </authorList>
    </citation>
    <scope>GENE FAMILY</scope>
    <scope>TISSUE SPECIFICITY</scope>
    <scope>NOMENCLATURE</scope>
</reference>
<dbReference type="EMBL" id="AP006168">
    <property type="protein sequence ID" value="BAD23727.1"/>
    <property type="molecule type" value="Genomic_DNA"/>
</dbReference>
<dbReference type="EMBL" id="AP008208">
    <property type="protein sequence ID" value="BAF09402.2"/>
    <property type="status" value="ALT_SEQ"/>
    <property type="molecule type" value="Genomic_DNA"/>
</dbReference>
<dbReference type="EMBL" id="AP014958">
    <property type="protein sequence ID" value="BAS79879.1"/>
    <property type="molecule type" value="Genomic_DNA"/>
</dbReference>
<dbReference type="EMBL" id="CM000139">
    <property type="protein sequence ID" value="EEE57410.1"/>
    <property type="molecule type" value="Genomic_DNA"/>
</dbReference>
<dbReference type="EMBL" id="AK243230">
    <property type="protein sequence ID" value="BAH01494.1"/>
    <property type="molecule type" value="mRNA"/>
</dbReference>
<dbReference type="RefSeq" id="XP_015622752.1">
    <property type="nucleotide sequence ID" value="XM_015767266.1"/>
</dbReference>
<dbReference type="SMR" id="Q6K223"/>
<dbReference type="FunCoup" id="Q6K223">
    <property type="interactions" value="93"/>
</dbReference>
<dbReference type="STRING" id="39947.Q6K223"/>
<dbReference type="iPTMnet" id="Q6K223"/>
<dbReference type="PaxDb" id="39947-Q6K223"/>
<dbReference type="EnsemblPlants" id="Os02t0628600-01">
    <property type="protein sequence ID" value="Os02t0628600-01"/>
    <property type="gene ID" value="Os02g0628600"/>
</dbReference>
<dbReference type="Gramene" id="Os02t0628600-01">
    <property type="protein sequence ID" value="Os02t0628600-01"/>
    <property type="gene ID" value="Os02g0628600"/>
</dbReference>
<dbReference type="KEGG" id="dosa:Os02g0628600"/>
<dbReference type="eggNOG" id="ENOG502QQ5I">
    <property type="taxonomic scope" value="Eukaryota"/>
</dbReference>
<dbReference type="HOGENOM" id="CLU_002626_3_5_1"/>
<dbReference type="InParanoid" id="Q6K223"/>
<dbReference type="OMA" id="HGVAWNF"/>
<dbReference type="OrthoDB" id="632949at2759"/>
<dbReference type="Proteomes" id="UP000000763">
    <property type="component" value="Chromosome 2"/>
</dbReference>
<dbReference type="Proteomes" id="UP000007752">
    <property type="component" value="Chromosome 2"/>
</dbReference>
<dbReference type="Proteomes" id="UP000059680">
    <property type="component" value="Chromosome 2"/>
</dbReference>
<dbReference type="GO" id="GO:0005634">
    <property type="term" value="C:nucleus"/>
    <property type="evidence" value="ECO:0007669"/>
    <property type="project" value="UniProtKB-SubCell"/>
</dbReference>
<dbReference type="GO" id="GO:0003677">
    <property type="term" value="F:DNA binding"/>
    <property type="evidence" value="ECO:0007669"/>
    <property type="project" value="UniProtKB-KW"/>
</dbReference>
<dbReference type="GO" id="GO:0009734">
    <property type="term" value="P:auxin-activated signaling pathway"/>
    <property type="evidence" value="ECO:0007669"/>
    <property type="project" value="UniProtKB-KW"/>
</dbReference>
<dbReference type="GO" id="GO:0006355">
    <property type="term" value="P:regulation of DNA-templated transcription"/>
    <property type="evidence" value="ECO:0007669"/>
    <property type="project" value="InterPro"/>
</dbReference>
<dbReference type="CDD" id="cd10017">
    <property type="entry name" value="B3_DNA"/>
    <property type="match status" value="1"/>
</dbReference>
<dbReference type="FunFam" id="2.30.30.1040:FF:000002">
    <property type="entry name" value="Auxin response factor"/>
    <property type="match status" value="1"/>
</dbReference>
<dbReference type="FunFam" id="2.40.330.10:FF:000001">
    <property type="entry name" value="Auxin response factor"/>
    <property type="match status" value="1"/>
</dbReference>
<dbReference type="Gene3D" id="2.30.30.1040">
    <property type="match status" value="1"/>
</dbReference>
<dbReference type="Gene3D" id="2.40.330.10">
    <property type="entry name" value="DNA-binding pseudobarrel domain"/>
    <property type="match status" value="1"/>
</dbReference>
<dbReference type="Gene3D" id="3.10.20.90">
    <property type="entry name" value="Phosphatidylinositol 3-kinase Catalytic Subunit, Chain A, domain 1"/>
    <property type="match status" value="1"/>
</dbReference>
<dbReference type="InterPro" id="IPR010525">
    <property type="entry name" value="ARF_dom"/>
</dbReference>
<dbReference type="InterPro" id="IPR044835">
    <property type="entry name" value="ARF_plant"/>
</dbReference>
<dbReference type="InterPro" id="IPR003340">
    <property type="entry name" value="B3_DNA-bd"/>
</dbReference>
<dbReference type="InterPro" id="IPR015300">
    <property type="entry name" value="DNA-bd_pseudobarrel_sf"/>
</dbReference>
<dbReference type="InterPro" id="IPR053793">
    <property type="entry name" value="PB1-like"/>
</dbReference>
<dbReference type="PANTHER" id="PTHR31384">
    <property type="entry name" value="AUXIN RESPONSE FACTOR 4-RELATED"/>
    <property type="match status" value="1"/>
</dbReference>
<dbReference type="PANTHER" id="PTHR31384:SF37">
    <property type="entry name" value="AUXIN RESPONSE FACTOR 8"/>
    <property type="match status" value="1"/>
</dbReference>
<dbReference type="Pfam" id="PF06507">
    <property type="entry name" value="ARF_AD"/>
    <property type="match status" value="1"/>
</dbReference>
<dbReference type="Pfam" id="PF02362">
    <property type="entry name" value="B3"/>
    <property type="match status" value="1"/>
</dbReference>
<dbReference type="SMART" id="SM01019">
    <property type="entry name" value="B3"/>
    <property type="match status" value="1"/>
</dbReference>
<dbReference type="SUPFAM" id="SSF101936">
    <property type="entry name" value="DNA-binding pseudobarrel domain"/>
    <property type="match status" value="1"/>
</dbReference>
<dbReference type="PROSITE" id="PS50863">
    <property type="entry name" value="B3"/>
    <property type="match status" value="1"/>
</dbReference>
<dbReference type="PROSITE" id="PS51745">
    <property type="entry name" value="PB1"/>
    <property type="match status" value="1"/>
</dbReference>